<comment type="function">
    <text evidence="1">The AROM polypeptide catalyzes 5 consecutive enzymatic reactions in prechorismate polyaromatic amino acid biosynthesis.</text>
</comment>
<comment type="catalytic activity">
    <reaction evidence="1">
        <text>7-phospho-2-dehydro-3-deoxy-D-arabino-heptonate = 3-dehydroquinate + phosphate</text>
        <dbReference type="Rhea" id="RHEA:21968"/>
        <dbReference type="ChEBI" id="CHEBI:32364"/>
        <dbReference type="ChEBI" id="CHEBI:43474"/>
        <dbReference type="ChEBI" id="CHEBI:58394"/>
        <dbReference type="EC" id="4.2.3.4"/>
    </reaction>
</comment>
<comment type="catalytic activity">
    <reaction evidence="1">
        <text>3-dehydroquinate = 3-dehydroshikimate + H2O</text>
        <dbReference type="Rhea" id="RHEA:21096"/>
        <dbReference type="ChEBI" id="CHEBI:15377"/>
        <dbReference type="ChEBI" id="CHEBI:16630"/>
        <dbReference type="ChEBI" id="CHEBI:32364"/>
        <dbReference type="EC" id="4.2.1.10"/>
    </reaction>
</comment>
<comment type="catalytic activity">
    <reaction evidence="1">
        <text>shikimate + NADP(+) = 3-dehydroshikimate + NADPH + H(+)</text>
        <dbReference type="Rhea" id="RHEA:17737"/>
        <dbReference type="ChEBI" id="CHEBI:15378"/>
        <dbReference type="ChEBI" id="CHEBI:16630"/>
        <dbReference type="ChEBI" id="CHEBI:36208"/>
        <dbReference type="ChEBI" id="CHEBI:57783"/>
        <dbReference type="ChEBI" id="CHEBI:58349"/>
        <dbReference type="EC" id="1.1.1.25"/>
    </reaction>
</comment>
<comment type="catalytic activity">
    <reaction evidence="1">
        <text>shikimate + ATP = 3-phosphoshikimate + ADP + H(+)</text>
        <dbReference type="Rhea" id="RHEA:13121"/>
        <dbReference type="ChEBI" id="CHEBI:15378"/>
        <dbReference type="ChEBI" id="CHEBI:30616"/>
        <dbReference type="ChEBI" id="CHEBI:36208"/>
        <dbReference type="ChEBI" id="CHEBI:145989"/>
        <dbReference type="ChEBI" id="CHEBI:456216"/>
        <dbReference type="EC" id="2.7.1.71"/>
    </reaction>
</comment>
<comment type="catalytic activity">
    <reaction evidence="1">
        <text>3-phosphoshikimate + phosphoenolpyruvate = 5-O-(1-carboxyvinyl)-3-phosphoshikimate + phosphate</text>
        <dbReference type="Rhea" id="RHEA:21256"/>
        <dbReference type="ChEBI" id="CHEBI:43474"/>
        <dbReference type="ChEBI" id="CHEBI:57701"/>
        <dbReference type="ChEBI" id="CHEBI:58702"/>
        <dbReference type="ChEBI" id="CHEBI:145989"/>
        <dbReference type="EC" id="2.5.1.19"/>
    </reaction>
</comment>
<comment type="cofactor">
    <cofactor>
        <name>Zn(2+)</name>
        <dbReference type="ChEBI" id="CHEBI:29105"/>
    </cofactor>
    <text>Binds 2 Zn(2+) ions per subunit.</text>
</comment>
<comment type="pathway">
    <text evidence="1">Metabolic intermediate biosynthesis; chorismate biosynthesis; chorismate from D-erythrose 4-phosphate and phosphoenolpyruvate: step 2/7.</text>
</comment>
<comment type="pathway">
    <text evidence="1">Metabolic intermediate biosynthesis; chorismate biosynthesis; chorismate from D-erythrose 4-phosphate and phosphoenolpyruvate: step 3/7.</text>
</comment>
<comment type="pathway">
    <text evidence="1">Metabolic intermediate biosynthesis; chorismate biosynthesis; chorismate from D-erythrose 4-phosphate and phosphoenolpyruvate: step 4/7.</text>
</comment>
<comment type="pathway">
    <text evidence="1">Metabolic intermediate biosynthesis; chorismate biosynthesis; chorismate from D-erythrose 4-phosphate and phosphoenolpyruvate: step 5/7.</text>
</comment>
<comment type="pathway">
    <text evidence="1">Metabolic intermediate biosynthesis; chorismate biosynthesis; chorismate from D-erythrose 4-phosphate and phosphoenolpyruvate: step 6/7.</text>
</comment>
<comment type="subunit">
    <text evidence="1">Homodimer.</text>
</comment>
<comment type="subcellular location">
    <subcellularLocation>
        <location evidence="1">Cytoplasm</location>
    </subcellularLocation>
</comment>
<comment type="similarity">
    <text evidence="1">In the N-terminal section; belongs to the sugar phosphate cyclases superfamily. Dehydroquinate synthase family.</text>
</comment>
<comment type="similarity">
    <text evidence="1">In the 2nd section; belongs to the EPSP synthase family.</text>
</comment>
<comment type="similarity">
    <text evidence="1">In the 3rd section; belongs to the shikimate kinase family.</text>
</comment>
<comment type="similarity">
    <text evidence="1">In the 4th section; belongs to the type-I 3-dehydroquinase family.</text>
</comment>
<comment type="similarity">
    <text evidence="1">In the C-terminal section; belongs to the shikimate dehydrogenase family.</text>
</comment>
<name>ARO1_FUSV7</name>
<accession>C7YZ74</accession>
<gene>
    <name type="ORF">NECHADRAFT_47780</name>
</gene>
<dbReference type="EC" id="4.2.3.4" evidence="1"/>
<dbReference type="EC" id="2.5.1.19" evidence="1"/>
<dbReference type="EC" id="2.7.1.71" evidence="1"/>
<dbReference type="EC" id="4.2.1.10" evidence="1"/>
<dbReference type="EC" id="1.1.1.25" evidence="1"/>
<dbReference type="EMBL" id="GG698904">
    <property type="protein sequence ID" value="EEU42552.1"/>
    <property type="molecule type" value="Genomic_DNA"/>
</dbReference>
<dbReference type="RefSeq" id="XP_003048265.1">
    <property type="nucleotide sequence ID" value="XM_003048219.1"/>
</dbReference>
<dbReference type="SMR" id="C7YZ74"/>
<dbReference type="FunCoup" id="C7YZ74">
    <property type="interactions" value="472"/>
</dbReference>
<dbReference type="STRING" id="660122.C7YZ74"/>
<dbReference type="EnsemblFungi" id="NechaT47780">
    <property type="protein sequence ID" value="NechaP47780"/>
    <property type="gene ID" value="NechaG47780"/>
</dbReference>
<dbReference type="GeneID" id="9667391"/>
<dbReference type="KEGG" id="nhe:NECHADRAFT_47780"/>
<dbReference type="VEuPathDB" id="FungiDB:NECHADRAFT_47780"/>
<dbReference type="eggNOG" id="KOG0692">
    <property type="taxonomic scope" value="Eukaryota"/>
</dbReference>
<dbReference type="HOGENOM" id="CLU_001201_1_2_1"/>
<dbReference type="InParanoid" id="C7YZ74"/>
<dbReference type="OMA" id="SWANMSW"/>
<dbReference type="OrthoDB" id="197068at2759"/>
<dbReference type="UniPathway" id="UPA00053">
    <property type="reaction ID" value="UER00085"/>
</dbReference>
<dbReference type="UniPathway" id="UPA00053">
    <property type="reaction ID" value="UER00086"/>
</dbReference>
<dbReference type="UniPathway" id="UPA00053">
    <property type="reaction ID" value="UER00087"/>
</dbReference>
<dbReference type="UniPathway" id="UPA00053">
    <property type="reaction ID" value="UER00088"/>
</dbReference>
<dbReference type="UniPathway" id="UPA00053">
    <property type="reaction ID" value="UER00089"/>
</dbReference>
<dbReference type="Proteomes" id="UP000005206">
    <property type="component" value="Unassembled WGS sequence"/>
</dbReference>
<dbReference type="GO" id="GO:0005737">
    <property type="term" value="C:cytoplasm"/>
    <property type="evidence" value="ECO:0007669"/>
    <property type="project" value="UniProtKB-SubCell"/>
</dbReference>
<dbReference type="GO" id="GO:0003855">
    <property type="term" value="F:3-dehydroquinate dehydratase activity"/>
    <property type="evidence" value="ECO:0007669"/>
    <property type="project" value="UniProtKB-UniRule"/>
</dbReference>
<dbReference type="GO" id="GO:0003856">
    <property type="term" value="F:3-dehydroquinate synthase activity"/>
    <property type="evidence" value="ECO:0007669"/>
    <property type="project" value="UniProtKB-UniRule"/>
</dbReference>
<dbReference type="GO" id="GO:0003866">
    <property type="term" value="F:3-phosphoshikimate 1-carboxyvinyltransferase activity"/>
    <property type="evidence" value="ECO:0007669"/>
    <property type="project" value="UniProtKB-UniRule"/>
</dbReference>
<dbReference type="GO" id="GO:0005524">
    <property type="term" value="F:ATP binding"/>
    <property type="evidence" value="ECO:0007669"/>
    <property type="project" value="UniProtKB-UniRule"/>
</dbReference>
<dbReference type="GO" id="GO:0046872">
    <property type="term" value="F:metal ion binding"/>
    <property type="evidence" value="ECO:0007669"/>
    <property type="project" value="UniProtKB-UniRule"/>
</dbReference>
<dbReference type="GO" id="GO:0004764">
    <property type="term" value="F:shikimate 3-dehydrogenase (NADP+) activity"/>
    <property type="evidence" value="ECO:0007669"/>
    <property type="project" value="UniProtKB-UniRule"/>
</dbReference>
<dbReference type="GO" id="GO:0004765">
    <property type="term" value="F:shikimate kinase activity"/>
    <property type="evidence" value="ECO:0007669"/>
    <property type="project" value="UniProtKB-UniRule"/>
</dbReference>
<dbReference type="GO" id="GO:0008652">
    <property type="term" value="P:amino acid biosynthetic process"/>
    <property type="evidence" value="ECO:0007669"/>
    <property type="project" value="UniProtKB-KW"/>
</dbReference>
<dbReference type="GO" id="GO:0009073">
    <property type="term" value="P:aromatic amino acid family biosynthetic process"/>
    <property type="evidence" value="ECO:0007669"/>
    <property type="project" value="UniProtKB-UniRule"/>
</dbReference>
<dbReference type="GO" id="GO:0009423">
    <property type="term" value="P:chorismate biosynthetic process"/>
    <property type="evidence" value="ECO:0007669"/>
    <property type="project" value="UniProtKB-UniRule"/>
</dbReference>
<dbReference type="CDD" id="cd00502">
    <property type="entry name" value="DHQase_I"/>
    <property type="match status" value="1"/>
</dbReference>
<dbReference type="CDD" id="cd08195">
    <property type="entry name" value="DHQS"/>
    <property type="match status" value="1"/>
</dbReference>
<dbReference type="CDD" id="cd01556">
    <property type="entry name" value="EPSP_synthase"/>
    <property type="match status" value="1"/>
</dbReference>
<dbReference type="CDD" id="cd01065">
    <property type="entry name" value="NAD_bind_Shikimate_DH"/>
    <property type="match status" value="1"/>
</dbReference>
<dbReference type="CDD" id="cd00464">
    <property type="entry name" value="SK"/>
    <property type="match status" value="1"/>
</dbReference>
<dbReference type="FunFam" id="1.20.1090.10:FF:000007">
    <property type="entry name" value="Pentafunctional AROM polypeptide"/>
    <property type="match status" value="1"/>
</dbReference>
<dbReference type="FunFam" id="3.20.20.70:FF:000135">
    <property type="entry name" value="Pentafunctional AROM polypeptide"/>
    <property type="match status" value="1"/>
</dbReference>
<dbReference type="FunFam" id="3.40.50.1970:FF:000007">
    <property type="entry name" value="Pentafunctional AROM polypeptide"/>
    <property type="match status" value="1"/>
</dbReference>
<dbReference type="FunFam" id="3.40.50.300:FF:001256">
    <property type="entry name" value="Pentafunctional AROM polypeptide"/>
    <property type="match status" value="1"/>
</dbReference>
<dbReference type="FunFam" id="3.65.10.10:FF:000007">
    <property type="entry name" value="Pentafunctional AROM polypeptide"/>
    <property type="match status" value="1"/>
</dbReference>
<dbReference type="FunFam" id="3.65.10.10:FF:000008">
    <property type="entry name" value="Pentafunctional AROM polypeptide"/>
    <property type="match status" value="1"/>
</dbReference>
<dbReference type="Gene3D" id="3.40.50.1970">
    <property type="match status" value="1"/>
</dbReference>
<dbReference type="Gene3D" id="3.20.20.70">
    <property type="entry name" value="Aldolase class I"/>
    <property type="match status" value="1"/>
</dbReference>
<dbReference type="Gene3D" id="1.20.1090.10">
    <property type="entry name" value="Dehydroquinate synthase-like - alpha domain"/>
    <property type="match status" value="1"/>
</dbReference>
<dbReference type="Gene3D" id="3.65.10.10">
    <property type="entry name" value="Enolpyruvate transferase domain"/>
    <property type="match status" value="2"/>
</dbReference>
<dbReference type="Gene3D" id="3.40.50.10860">
    <property type="entry name" value="Leucine Dehydrogenase, chain A, domain 1"/>
    <property type="match status" value="1"/>
</dbReference>
<dbReference type="Gene3D" id="3.40.50.720">
    <property type="entry name" value="NAD(P)-binding Rossmann-like Domain"/>
    <property type="match status" value="1"/>
</dbReference>
<dbReference type="Gene3D" id="3.40.50.300">
    <property type="entry name" value="P-loop containing nucleotide triphosphate hydrolases"/>
    <property type="match status" value="1"/>
</dbReference>
<dbReference type="HAMAP" id="MF_00210">
    <property type="entry name" value="EPSP_synth"/>
    <property type="match status" value="1"/>
</dbReference>
<dbReference type="HAMAP" id="MF_03143">
    <property type="entry name" value="Pentafunct_AroM"/>
    <property type="match status" value="1"/>
</dbReference>
<dbReference type="HAMAP" id="MF_00109">
    <property type="entry name" value="Shikimate_kinase"/>
    <property type="match status" value="1"/>
</dbReference>
<dbReference type="InterPro" id="IPR018508">
    <property type="entry name" value="3-dehydroquinate_DH_AS"/>
</dbReference>
<dbReference type="InterPro" id="IPR013785">
    <property type="entry name" value="Aldolase_TIM"/>
</dbReference>
<dbReference type="InterPro" id="IPR046346">
    <property type="entry name" value="Aminoacid_DH-like_N_sf"/>
</dbReference>
<dbReference type="InterPro" id="IPR016037">
    <property type="entry name" value="DHQ_synth_AroB"/>
</dbReference>
<dbReference type="InterPro" id="IPR030960">
    <property type="entry name" value="DHQS/DOIS_N"/>
</dbReference>
<dbReference type="InterPro" id="IPR056179">
    <property type="entry name" value="DHQS_C"/>
</dbReference>
<dbReference type="InterPro" id="IPR001381">
    <property type="entry name" value="DHquinase_I"/>
</dbReference>
<dbReference type="InterPro" id="IPR001986">
    <property type="entry name" value="Enolpyruvate_Tfrase_dom"/>
</dbReference>
<dbReference type="InterPro" id="IPR036968">
    <property type="entry name" value="Enolpyruvate_Tfrase_sf"/>
</dbReference>
<dbReference type="InterPro" id="IPR006264">
    <property type="entry name" value="EPSP_synthase"/>
</dbReference>
<dbReference type="InterPro" id="IPR023193">
    <property type="entry name" value="EPSP_synthase_CS"/>
</dbReference>
<dbReference type="InterPro" id="IPR036291">
    <property type="entry name" value="NAD(P)-bd_dom_sf"/>
</dbReference>
<dbReference type="InterPro" id="IPR027417">
    <property type="entry name" value="P-loop_NTPase"/>
</dbReference>
<dbReference type="InterPro" id="IPR008289">
    <property type="entry name" value="Pentafunct_AroM"/>
</dbReference>
<dbReference type="InterPro" id="IPR013792">
    <property type="entry name" value="RNA3'P_cycl/enolpyr_Trfase_a/b"/>
</dbReference>
<dbReference type="InterPro" id="IPR041121">
    <property type="entry name" value="SDH_C"/>
</dbReference>
<dbReference type="InterPro" id="IPR031322">
    <property type="entry name" value="Shikimate/glucono_kinase"/>
</dbReference>
<dbReference type="InterPro" id="IPR013708">
    <property type="entry name" value="Shikimate_DH-bd_N"/>
</dbReference>
<dbReference type="InterPro" id="IPR010110">
    <property type="entry name" value="Shikimate_DH_AroM-type"/>
</dbReference>
<dbReference type="InterPro" id="IPR000623">
    <property type="entry name" value="Shikimate_kinase/TSH1"/>
</dbReference>
<dbReference type="InterPro" id="IPR023000">
    <property type="entry name" value="Shikimate_kinase_CS"/>
</dbReference>
<dbReference type="NCBIfam" id="TIGR01356">
    <property type="entry name" value="aroA"/>
    <property type="match status" value="1"/>
</dbReference>
<dbReference type="NCBIfam" id="TIGR01357">
    <property type="entry name" value="aroB"/>
    <property type="match status" value="1"/>
</dbReference>
<dbReference type="NCBIfam" id="TIGR01093">
    <property type="entry name" value="aroD"/>
    <property type="match status" value="1"/>
</dbReference>
<dbReference type="NCBIfam" id="TIGR01809">
    <property type="entry name" value="Shik-DH-AROM"/>
    <property type="match status" value="1"/>
</dbReference>
<dbReference type="PANTHER" id="PTHR21090">
    <property type="entry name" value="AROM/DEHYDROQUINATE SYNTHASE"/>
    <property type="match status" value="1"/>
</dbReference>
<dbReference type="PANTHER" id="PTHR21090:SF5">
    <property type="entry name" value="PENTAFUNCTIONAL AROM POLYPEPTIDE"/>
    <property type="match status" value="1"/>
</dbReference>
<dbReference type="Pfam" id="PF01761">
    <property type="entry name" value="DHQ_synthase"/>
    <property type="match status" value="1"/>
</dbReference>
<dbReference type="Pfam" id="PF24621">
    <property type="entry name" value="DHQS_C"/>
    <property type="match status" value="1"/>
</dbReference>
<dbReference type="Pfam" id="PF01487">
    <property type="entry name" value="DHquinase_I"/>
    <property type="match status" value="1"/>
</dbReference>
<dbReference type="Pfam" id="PF00275">
    <property type="entry name" value="EPSP_synthase"/>
    <property type="match status" value="1"/>
</dbReference>
<dbReference type="Pfam" id="PF18317">
    <property type="entry name" value="SDH_C"/>
    <property type="match status" value="1"/>
</dbReference>
<dbReference type="Pfam" id="PF08501">
    <property type="entry name" value="Shikimate_dh_N"/>
    <property type="match status" value="1"/>
</dbReference>
<dbReference type="Pfam" id="PF01202">
    <property type="entry name" value="SKI"/>
    <property type="match status" value="1"/>
</dbReference>
<dbReference type="PIRSF" id="PIRSF000514">
    <property type="entry name" value="Pentafunct_AroM"/>
    <property type="match status" value="1"/>
</dbReference>
<dbReference type="PRINTS" id="PR01100">
    <property type="entry name" value="SHIKIMTKNASE"/>
</dbReference>
<dbReference type="SUPFAM" id="SSF51569">
    <property type="entry name" value="Aldolase"/>
    <property type="match status" value="1"/>
</dbReference>
<dbReference type="SUPFAM" id="SSF53223">
    <property type="entry name" value="Aminoacid dehydrogenase-like, N-terminal domain"/>
    <property type="match status" value="1"/>
</dbReference>
<dbReference type="SUPFAM" id="SSF56796">
    <property type="entry name" value="Dehydroquinate synthase-like"/>
    <property type="match status" value="1"/>
</dbReference>
<dbReference type="SUPFAM" id="SSF55205">
    <property type="entry name" value="EPT/RTPC-like"/>
    <property type="match status" value="1"/>
</dbReference>
<dbReference type="SUPFAM" id="SSF51735">
    <property type="entry name" value="NAD(P)-binding Rossmann-fold domains"/>
    <property type="match status" value="1"/>
</dbReference>
<dbReference type="SUPFAM" id="SSF52540">
    <property type="entry name" value="P-loop containing nucleoside triphosphate hydrolases"/>
    <property type="match status" value="1"/>
</dbReference>
<dbReference type="PROSITE" id="PS01028">
    <property type="entry name" value="DEHYDROQUINASE_I"/>
    <property type="match status" value="1"/>
</dbReference>
<dbReference type="PROSITE" id="PS00104">
    <property type="entry name" value="EPSP_SYNTHASE_1"/>
    <property type="match status" value="1"/>
</dbReference>
<dbReference type="PROSITE" id="PS00885">
    <property type="entry name" value="EPSP_SYNTHASE_2"/>
    <property type="match status" value="1"/>
</dbReference>
<dbReference type="PROSITE" id="PS01128">
    <property type="entry name" value="SHIKIMATE_KINASE"/>
    <property type="match status" value="1"/>
</dbReference>
<protein>
    <recommendedName>
        <fullName evidence="1">Pentafunctional AROM polypeptide</fullName>
    </recommendedName>
    <domain>
        <recommendedName>
            <fullName evidence="1">3-dehydroquinate synthase</fullName>
            <shortName evidence="1">DHQS</shortName>
            <ecNumber evidence="1">4.2.3.4</ecNumber>
        </recommendedName>
    </domain>
    <domain>
        <recommendedName>
            <fullName evidence="1">3-phosphoshikimate 1-carboxyvinyltransferase</fullName>
            <ecNumber evidence="1">2.5.1.19</ecNumber>
        </recommendedName>
        <alternativeName>
            <fullName evidence="1">5-enolpyruvylshikimate-3-phosphate synthase</fullName>
            <shortName evidence="1">EPSP synthase</shortName>
            <shortName evidence="1">EPSPS</shortName>
        </alternativeName>
    </domain>
    <domain>
        <recommendedName>
            <fullName evidence="1">Shikimate kinase</fullName>
            <shortName evidence="1">SK</shortName>
            <ecNumber evidence="1">2.7.1.71</ecNumber>
        </recommendedName>
    </domain>
    <domain>
        <recommendedName>
            <fullName evidence="1">3-dehydroquinate dehydratase</fullName>
            <shortName evidence="1">3-dehydroquinase</shortName>
            <ecNumber evidence="1">4.2.1.10</ecNumber>
        </recommendedName>
    </domain>
    <domain>
        <recommendedName>
            <fullName evidence="1">Shikimate dehydrogenase</fullName>
            <ecNumber evidence="1">1.1.1.25</ecNumber>
        </recommendedName>
    </domain>
</protein>
<organism>
    <name type="scientific">Fusarium vanettenii (strain ATCC MYA-4622 / CBS 123669 / FGSC 9596 / NRRL 45880 / 77-13-4)</name>
    <name type="common">Fusarium solani subsp. pisi</name>
    <dbReference type="NCBI Taxonomy" id="660122"/>
    <lineage>
        <taxon>Eukaryota</taxon>
        <taxon>Fungi</taxon>
        <taxon>Dikarya</taxon>
        <taxon>Ascomycota</taxon>
        <taxon>Pezizomycotina</taxon>
        <taxon>Sordariomycetes</taxon>
        <taxon>Hypocreomycetidae</taxon>
        <taxon>Hypocreales</taxon>
        <taxon>Nectriaceae</taxon>
        <taxon>Fusarium</taxon>
        <taxon>Fusarium solani species complex</taxon>
        <taxon>Fusarium vanettenii</taxon>
    </lineage>
</organism>
<evidence type="ECO:0000255" key="1">
    <source>
        <dbReference type="HAMAP-Rule" id="MF_03143"/>
    </source>
</evidence>
<feature type="chain" id="PRO_0000406725" description="Pentafunctional AROM polypeptide">
    <location>
        <begin position="1"/>
        <end position="1569"/>
    </location>
</feature>
<feature type="region of interest" description="3-dehydroquinate synthase">
    <location>
        <begin position="1"/>
        <end position="382"/>
    </location>
</feature>
<feature type="region of interest" description="EPSP synthase">
    <location>
        <begin position="395"/>
        <end position="837"/>
    </location>
</feature>
<feature type="region of interest" description="Shikimate kinase">
    <location>
        <begin position="859"/>
        <end position="1053"/>
    </location>
</feature>
<feature type="region of interest" description="3-dehydroquinase">
    <location>
        <begin position="1054"/>
        <end position="1267"/>
    </location>
</feature>
<feature type="region of interest" description="Shikimate dehydrogenase">
    <location>
        <begin position="1280"/>
        <end position="1569"/>
    </location>
</feature>
<feature type="active site" description="Proton acceptor; for 3-dehydroquinate synthase activity" evidence="1">
    <location>
        <position position="258"/>
    </location>
</feature>
<feature type="active site" description="Proton acceptor; for 3-dehydroquinate synthase activity" evidence="1">
    <location>
        <position position="273"/>
    </location>
</feature>
<feature type="active site" description="For EPSP synthase activity" evidence="1">
    <location>
        <position position="819"/>
    </location>
</feature>
<feature type="active site" description="Proton acceptor; for 3-dehydroquinate dehydratase activity" evidence="1">
    <location>
        <position position="1170"/>
    </location>
</feature>
<feature type="active site" description="Schiff-base intermediate with substrate; for 3-dehydroquinate dehydratase activity" evidence="1">
    <location>
        <position position="1198"/>
    </location>
</feature>
<feature type="binding site" evidence="1">
    <location>
        <begin position="49"/>
        <end position="51"/>
    </location>
    <ligand>
        <name>NAD(+)</name>
        <dbReference type="ChEBI" id="CHEBI:57540"/>
    </ligand>
</feature>
<feature type="binding site" evidence="1">
    <location>
        <begin position="84"/>
        <end position="87"/>
    </location>
    <ligand>
        <name>NAD(+)</name>
        <dbReference type="ChEBI" id="CHEBI:57540"/>
    </ligand>
</feature>
<feature type="binding site" evidence="1">
    <location>
        <begin position="115"/>
        <end position="117"/>
    </location>
    <ligand>
        <name>NAD(+)</name>
        <dbReference type="ChEBI" id="CHEBI:57540"/>
    </ligand>
</feature>
<feature type="binding site" evidence="1">
    <location>
        <position position="120"/>
    </location>
    <ligand>
        <name>NAD(+)</name>
        <dbReference type="ChEBI" id="CHEBI:57540"/>
    </ligand>
</feature>
<feature type="binding site" evidence="1">
    <location>
        <position position="131"/>
    </location>
    <ligand>
        <name>7-phospho-2-dehydro-3-deoxy-D-arabino-heptonate</name>
        <dbReference type="ChEBI" id="CHEBI:58394"/>
    </ligand>
</feature>
<feature type="binding site" evidence="1">
    <location>
        <begin position="140"/>
        <end position="141"/>
    </location>
    <ligand>
        <name>NAD(+)</name>
        <dbReference type="ChEBI" id="CHEBI:57540"/>
    </ligand>
</feature>
<feature type="binding site" evidence="1">
    <location>
        <position position="147"/>
    </location>
    <ligand>
        <name>7-phospho-2-dehydro-3-deoxy-D-arabino-heptonate</name>
        <dbReference type="ChEBI" id="CHEBI:58394"/>
    </ligand>
</feature>
<feature type="binding site" evidence="1">
    <location>
        <position position="153"/>
    </location>
    <ligand>
        <name>7-phospho-2-dehydro-3-deoxy-D-arabino-heptonate</name>
        <dbReference type="ChEBI" id="CHEBI:58394"/>
    </ligand>
</feature>
<feature type="binding site" evidence="1">
    <location>
        <position position="162"/>
    </location>
    <ligand>
        <name>NAD(+)</name>
        <dbReference type="ChEBI" id="CHEBI:57540"/>
    </ligand>
</feature>
<feature type="binding site" evidence="1">
    <location>
        <position position="163"/>
    </location>
    <ligand>
        <name>7-phospho-2-dehydro-3-deoxy-D-arabino-heptonate</name>
        <dbReference type="ChEBI" id="CHEBI:58394"/>
    </ligand>
</feature>
<feature type="binding site" evidence="1">
    <location>
        <begin position="180"/>
        <end position="183"/>
    </location>
    <ligand>
        <name>NAD(+)</name>
        <dbReference type="ChEBI" id="CHEBI:57540"/>
    </ligand>
</feature>
<feature type="binding site" evidence="1">
    <location>
        <position position="191"/>
    </location>
    <ligand>
        <name>NAD(+)</name>
        <dbReference type="ChEBI" id="CHEBI:57540"/>
    </ligand>
</feature>
<feature type="binding site" evidence="1">
    <location>
        <begin position="195"/>
        <end position="198"/>
    </location>
    <ligand>
        <name>7-phospho-2-dehydro-3-deoxy-D-arabino-heptonate</name>
        <dbReference type="ChEBI" id="CHEBI:58394"/>
    </ligand>
</feature>
<feature type="binding site" evidence="1">
    <location>
        <position position="195"/>
    </location>
    <ligand>
        <name>Zn(2+)</name>
        <dbReference type="ChEBI" id="CHEBI:29105"/>
        <note>catalytic</note>
    </ligand>
</feature>
<feature type="binding site" evidence="1">
    <location>
        <position position="248"/>
    </location>
    <ligand>
        <name>7-phospho-2-dehydro-3-deoxy-D-arabino-heptonate</name>
        <dbReference type="ChEBI" id="CHEBI:58394"/>
    </ligand>
</feature>
<feature type="binding site" evidence="1">
    <location>
        <begin position="262"/>
        <end position="266"/>
    </location>
    <ligand>
        <name>7-phospho-2-dehydro-3-deoxy-D-arabino-heptonate</name>
        <dbReference type="ChEBI" id="CHEBI:58394"/>
    </ligand>
</feature>
<feature type="binding site" evidence="1">
    <location>
        <position position="269"/>
    </location>
    <ligand>
        <name>7-phospho-2-dehydro-3-deoxy-D-arabino-heptonate</name>
        <dbReference type="ChEBI" id="CHEBI:58394"/>
    </ligand>
</feature>
<feature type="binding site" evidence="1">
    <location>
        <position position="269"/>
    </location>
    <ligand>
        <name>Zn(2+)</name>
        <dbReference type="ChEBI" id="CHEBI:29105"/>
        <note>catalytic</note>
    </ligand>
</feature>
<feature type="binding site" evidence="1">
    <location>
        <position position="285"/>
    </location>
    <ligand>
        <name>7-phospho-2-dehydro-3-deoxy-D-arabino-heptonate</name>
        <dbReference type="ChEBI" id="CHEBI:58394"/>
    </ligand>
</feature>
<feature type="binding site" evidence="1">
    <location>
        <position position="285"/>
    </location>
    <ligand>
        <name>Zn(2+)</name>
        <dbReference type="ChEBI" id="CHEBI:29105"/>
        <note>catalytic</note>
    </ligand>
</feature>
<feature type="binding site" evidence="1">
    <location>
        <position position="354"/>
    </location>
    <ligand>
        <name>7-phospho-2-dehydro-3-deoxy-D-arabino-heptonate</name>
        <dbReference type="ChEBI" id="CHEBI:58394"/>
    </ligand>
</feature>
<feature type="binding site" evidence="1">
    <location>
        <begin position="866"/>
        <end position="873"/>
    </location>
    <ligand>
        <name>ATP</name>
        <dbReference type="ChEBI" id="CHEBI:30616"/>
    </ligand>
</feature>
<reference key="1">
    <citation type="journal article" date="2009" name="PLoS Genet.">
        <title>The genome of Nectria haematococca: contribution of supernumerary chromosomes to gene expansion.</title>
        <authorList>
            <person name="Coleman J.J."/>
            <person name="Rounsley S.D."/>
            <person name="Rodriguez-Carres M."/>
            <person name="Kuo A."/>
            <person name="Wasmann C.C."/>
            <person name="Grimwood J."/>
            <person name="Schmutz J."/>
            <person name="Taga M."/>
            <person name="White G.J."/>
            <person name="Zhou S."/>
            <person name="Schwartz D.C."/>
            <person name="Freitag M."/>
            <person name="Ma L.-J."/>
            <person name="Danchin E.G.J."/>
            <person name="Henrissat B."/>
            <person name="Coutinho P.M."/>
            <person name="Nelson D.R."/>
            <person name="Straney D."/>
            <person name="Napoli C.A."/>
            <person name="Barker B.M."/>
            <person name="Gribskov M."/>
            <person name="Rep M."/>
            <person name="Kroken S."/>
            <person name="Molnar I."/>
            <person name="Rensing C."/>
            <person name="Kennell J.C."/>
            <person name="Zamora J."/>
            <person name="Farman M.L."/>
            <person name="Selker E.U."/>
            <person name="Salamov A."/>
            <person name="Shapiro H."/>
            <person name="Pangilinan J."/>
            <person name="Lindquist E."/>
            <person name="Lamers C."/>
            <person name="Grigoriev I.V."/>
            <person name="Geiser D.M."/>
            <person name="Covert S.F."/>
            <person name="Temporini E."/>
            <person name="VanEtten H.D."/>
        </authorList>
    </citation>
    <scope>NUCLEOTIDE SEQUENCE [LARGE SCALE GENOMIC DNA]</scope>
    <source>
        <strain>ATCC MYA-4622 / CBS 123669 / FGSC 9596 / NRRL 45880 / 77-13-4</strain>
    </source>
</reference>
<sequence>MAEAKKPGPERISILGEANIIVDHGLWLNFVVDDLLQNTPTSTYVLITDTNLFDTYVPAFQAQFEAAAEGKATRLLTYTIPPGEASKSRETKAEIEDWMLSQQCTRDTVIIALGGGVMGDMIGYVAATFMRGVRFVQVPTTLLAMVDSSIGGKTAIDTPMGKNLVGAFWQPKRIYIDLAFLETLPVREFINGMAEVVKTAAIWNETEFTVLEESAAHILECVRSKGEGRLTPIKDVLKRIVIGSAGVKAEVVSSDEREGGLRNLLNFGHSIGHAIEAILTPQLLHGEAVAIGMVKEAELARYLGVLRPGAVARLVKCIASYDLPTSIHDKRVVKLTAGKKCPVDVLLQKMGVDKKNDGQKKKIVLLSAIGKCHEPRASVVDDKTIRTILSPSIQVTPGVPSNLDVTVTPPGSKSISNRALVLAALGLGSCRIKNLLHSDDTEYMLSAIHQLGGASYSWQDAGEVLVVDGKGGNLQASKEALYLGNAGTASRFLTTVVALCSPSESASSTILTGNARMKVRPIGPLVDALRSNGVEIEYQGKENSLPLRVDAAGGLKGGVIELAATVSSQYVSSILMAAPYAKNPVTLRLVGGKPISQPYIDMTISMMASFGVHVTASSDEPNTYHIPQGQYQNPSEYIIESDASSATYPLAIAAITGTTCTIPNIGSKSLQGDARFAVDVLQPMGCTVNQSDYSTTVTGPAPGELKGLPHVDMEPMTDAFLTASVLAAVASGKTQITGIANQRVKECNRIAAMKDQLAKFGVQCNELDDGIEVLGKGQDGGISAPTVGIHCYDDHRVAMSFSVLAVASPSPVIVTERECVGKTWPGWWDILSQAFKVDMIGHEPDANADEEDSKSSVMERSVFIIGMRGAGKTTAGNWMAKMLGWKFIDLDQELERRAGCTIPEMIRGSRGWEGFRADELSLLKDVMAKNSHGHIFSCGGGLVETPEARQLLKDYGRNGGNVLLIHRDTEQVVEYLMRDKTRPAYTSEIREVYLRRKDFYQECSNLLYYSPHSESSGSKSEIPCDFQQFVSSISGRSTHLKDVMEKDHSFFVSLTVPDVSEAASLIPEVVVGSDAVELRVDLLQDRSVDSVTRQVSILRALAKKPIVFTLRTVSQGGKFPDEAYEEGLELYRLALRMGMEYVDVEMTLPENIIQTVTESRGHSRIIASHHDPQGTMSWKNASWIPFYNRALQFGDIIKLVGVARSSEDNFDLAKFKSRMQEAQKTPMIAMNMGKAGKLSRVLNKFLTPVSHPALPFKAAPGQMSAAEIRRGLALLGDLDPCNFYLFGKPISASRSPALHNTLFGQTGLPHQYHRLETDNIQDVREVLQAPDFGGASVTIPLKLDVMGQVDELSEAARTIGAVNTVVPIGKADASDRRRLLGDNTDWRGMVHALRDEGVEEQADSETKGAAMVVGSGGTTRAAIFALHSLGFGPIYIAARNQAKVDALAADFPAEYQLQGLSQPSDADKVSSNLNVVISTIPADRPIDPSLQELVGALLSRPAVGTERRVLLEMAYKPSHTPIMQLADEAGNWTTVPGLEVLASQGWYQFELWTGITPLYRDARSAVLGL</sequence>
<keyword id="KW-0028">Amino-acid biosynthesis</keyword>
<keyword id="KW-0057">Aromatic amino acid biosynthesis</keyword>
<keyword id="KW-0067">ATP-binding</keyword>
<keyword id="KW-0963">Cytoplasm</keyword>
<keyword id="KW-0418">Kinase</keyword>
<keyword id="KW-0456">Lyase</keyword>
<keyword id="KW-0479">Metal-binding</keyword>
<keyword id="KW-0511">Multifunctional enzyme</keyword>
<keyword id="KW-0521">NADP</keyword>
<keyword id="KW-0547">Nucleotide-binding</keyword>
<keyword id="KW-0560">Oxidoreductase</keyword>
<keyword id="KW-1185">Reference proteome</keyword>
<keyword id="KW-0808">Transferase</keyword>
<keyword id="KW-0862">Zinc</keyword>
<proteinExistence type="inferred from homology"/>